<dbReference type="EMBL" id="CP001052">
    <property type="protein sequence ID" value="ACD18033.1"/>
    <property type="molecule type" value="Genomic_DNA"/>
</dbReference>
<dbReference type="RefSeq" id="WP_007180136.1">
    <property type="nucleotide sequence ID" value="NC_010681.1"/>
</dbReference>
<dbReference type="SMR" id="B2T750"/>
<dbReference type="STRING" id="398527.Bphyt_3643"/>
<dbReference type="GeneID" id="97310993"/>
<dbReference type="KEGG" id="bpy:Bphyt_3643"/>
<dbReference type="eggNOG" id="COG0088">
    <property type="taxonomic scope" value="Bacteria"/>
</dbReference>
<dbReference type="HOGENOM" id="CLU_041575_5_2_4"/>
<dbReference type="OrthoDB" id="9803201at2"/>
<dbReference type="Proteomes" id="UP000001739">
    <property type="component" value="Chromosome 1"/>
</dbReference>
<dbReference type="GO" id="GO:1990904">
    <property type="term" value="C:ribonucleoprotein complex"/>
    <property type="evidence" value="ECO:0007669"/>
    <property type="project" value="UniProtKB-KW"/>
</dbReference>
<dbReference type="GO" id="GO:0005840">
    <property type="term" value="C:ribosome"/>
    <property type="evidence" value="ECO:0007669"/>
    <property type="project" value="UniProtKB-KW"/>
</dbReference>
<dbReference type="GO" id="GO:0019843">
    <property type="term" value="F:rRNA binding"/>
    <property type="evidence" value="ECO:0007669"/>
    <property type="project" value="UniProtKB-UniRule"/>
</dbReference>
<dbReference type="GO" id="GO:0003735">
    <property type="term" value="F:structural constituent of ribosome"/>
    <property type="evidence" value="ECO:0007669"/>
    <property type="project" value="InterPro"/>
</dbReference>
<dbReference type="GO" id="GO:0006412">
    <property type="term" value="P:translation"/>
    <property type="evidence" value="ECO:0007669"/>
    <property type="project" value="UniProtKB-UniRule"/>
</dbReference>
<dbReference type="Gene3D" id="3.40.1370.10">
    <property type="match status" value="1"/>
</dbReference>
<dbReference type="HAMAP" id="MF_01328_B">
    <property type="entry name" value="Ribosomal_uL4_B"/>
    <property type="match status" value="1"/>
</dbReference>
<dbReference type="InterPro" id="IPR002136">
    <property type="entry name" value="Ribosomal_uL4"/>
</dbReference>
<dbReference type="InterPro" id="IPR013005">
    <property type="entry name" value="Ribosomal_uL4-like"/>
</dbReference>
<dbReference type="InterPro" id="IPR023574">
    <property type="entry name" value="Ribosomal_uL4_dom_sf"/>
</dbReference>
<dbReference type="NCBIfam" id="TIGR03953">
    <property type="entry name" value="rplD_bact"/>
    <property type="match status" value="1"/>
</dbReference>
<dbReference type="PANTHER" id="PTHR10746">
    <property type="entry name" value="50S RIBOSOMAL PROTEIN L4"/>
    <property type="match status" value="1"/>
</dbReference>
<dbReference type="PANTHER" id="PTHR10746:SF6">
    <property type="entry name" value="LARGE RIBOSOMAL SUBUNIT PROTEIN UL4M"/>
    <property type="match status" value="1"/>
</dbReference>
<dbReference type="Pfam" id="PF00573">
    <property type="entry name" value="Ribosomal_L4"/>
    <property type="match status" value="1"/>
</dbReference>
<dbReference type="SUPFAM" id="SSF52166">
    <property type="entry name" value="Ribosomal protein L4"/>
    <property type="match status" value="1"/>
</dbReference>
<comment type="function">
    <text evidence="1">One of the primary rRNA binding proteins, this protein initially binds near the 5'-end of the 23S rRNA. It is important during the early stages of 50S assembly. It makes multiple contacts with different domains of the 23S rRNA in the assembled 50S subunit and ribosome.</text>
</comment>
<comment type="function">
    <text evidence="1">Forms part of the polypeptide exit tunnel.</text>
</comment>
<comment type="subunit">
    <text evidence="1">Part of the 50S ribosomal subunit.</text>
</comment>
<comment type="similarity">
    <text evidence="1">Belongs to the universal ribosomal protein uL4 family.</text>
</comment>
<keyword id="KW-0687">Ribonucleoprotein</keyword>
<keyword id="KW-0689">Ribosomal protein</keyword>
<keyword id="KW-0694">RNA-binding</keyword>
<keyword id="KW-0699">rRNA-binding</keyword>
<reference key="1">
    <citation type="journal article" date="2011" name="J. Bacteriol.">
        <title>Complete genome sequence of the plant growth-promoting endophyte Burkholderia phytofirmans strain PsJN.</title>
        <authorList>
            <person name="Weilharter A."/>
            <person name="Mitter B."/>
            <person name="Shin M.V."/>
            <person name="Chain P.S."/>
            <person name="Nowak J."/>
            <person name="Sessitsch A."/>
        </authorList>
    </citation>
    <scope>NUCLEOTIDE SEQUENCE [LARGE SCALE GENOMIC DNA]</scope>
    <source>
        <strain>DSM 17436 / LMG 22146 / PsJN</strain>
    </source>
</reference>
<gene>
    <name evidence="1" type="primary">rplD</name>
    <name type="ordered locus">Bphyt_3643</name>
</gene>
<feature type="chain" id="PRO_1000142094" description="Large ribosomal subunit protein uL4">
    <location>
        <begin position="1"/>
        <end position="206"/>
    </location>
</feature>
<feature type="region of interest" description="Disordered" evidence="2">
    <location>
        <begin position="44"/>
        <end position="78"/>
    </location>
</feature>
<feature type="compositionally biased region" description="Basic residues" evidence="2">
    <location>
        <begin position="58"/>
        <end position="70"/>
    </location>
</feature>
<proteinExistence type="inferred from homology"/>
<sequence>MELKLLNANGQEGAGVSASDVVFGRDYNEALIHQVVVAYQANARSGNRAQKDREQVKHTTKKPWRQKGTGRARAGMSSSPLWRGGGRIFPNSPEENFSHKVNKKMHRAGLCSIFSQLAREGRISVVDELTLEAPKTKLLAEKFKAMGLDSVLVITDTVDENLYLASRNLAHVAVVEPRYADPLSLIYFKKILITKAAVAQIEELLS</sequence>
<organism>
    <name type="scientific">Paraburkholderia phytofirmans (strain DSM 17436 / LMG 22146 / PsJN)</name>
    <name type="common">Burkholderia phytofirmans</name>
    <dbReference type="NCBI Taxonomy" id="398527"/>
    <lineage>
        <taxon>Bacteria</taxon>
        <taxon>Pseudomonadati</taxon>
        <taxon>Pseudomonadota</taxon>
        <taxon>Betaproteobacteria</taxon>
        <taxon>Burkholderiales</taxon>
        <taxon>Burkholderiaceae</taxon>
        <taxon>Paraburkholderia</taxon>
    </lineage>
</organism>
<accession>B2T750</accession>
<protein>
    <recommendedName>
        <fullName evidence="1">Large ribosomal subunit protein uL4</fullName>
    </recommendedName>
    <alternativeName>
        <fullName evidence="3">50S ribosomal protein L4</fullName>
    </alternativeName>
</protein>
<name>RL4_PARPJ</name>
<evidence type="ECO:0000255" key="1">
    <source>
        <dbReference type="HAMAP-Rule" id="MF_01328"/>
    </source>
</evidence>
<evidence type="ECO:0000256" key="2">
    <source>
        <dbReference type="SAM" id="MobiDB-lite"/>
    </source>
</evidence>
<evidence type="ECO:0000305" key="3"/>